<feature type="chain" id="PRO_0000215257" description="Uncharacterized protein MPN_510">
    <location>
        <begin position="1"/>
        <end position="458"/>
    </location>
</feature>
<comment type="similarity">
    <text evidence="1">Belongs to the MG032/MG096/MG288 family.</text>
</comment>
<dbReference type="EMBL" id="U00089">
    <property type="protein sequence ID" value="AAB95980.1"/>
    <property type="molecule type" value="Genomic_DNA"/>
</dbReference>
<dbReference type="PIR" id="S73658">
    <property type="entry name" value="S73658"/>
</dbReference>
<dbReference type="RefSeq" id="NP_110198.1">
    <property type="nucleotide sequence ID" value="NC_000912.1"/>
</dbReference>
<dbReference type="RefSeq" id="WP_010874866.1">
    <property type="nucleotide sequence ID" value="NC_000912.1"/>
</dbReference>
<dbReference type="SMR" id="P75276"/>
<dbReference type="EnsemblBacteria" id="AAB95980">
    <property type="protein sequence ID" value="AAB95980"/>
    <property type="gene ID" value="MPN_510"/>
</dbReference>
<dbReference type="KEGG" id="mpn:MPN_510"/>
<dbReference type="PATRIC" id="fig|272634.6.peg.561"/>
<dbReference type="HOGENOM" id="CLU_029253_0_0_14"/>
<dbReference type="BioCyc" id="MPNE272634:G1GJ3-836-MONOMER"/>
<dbReference type="Proteomes" id="UP000000808">
    <property type="component" value="Chromosome"/>
</dbReference>
<dbReference type="InterPro" id="IPR004306">
    <property type="entry name" value="DUF237"/>
</dbReference>
<dbReference type="InterPro" id="IPR004319">
    <property type="entry name" value="DUF240"/>
</dbReference>
<dbReference type="Pfam" id="PF03072">
    <property type="entry name" value="DUF237"/>
    <property type="match status" value="1"/>
</dbReference>
<dbReference type="Pfam" id="PF03086">
    <property type="entry name" value="DUF240"/>
    <property type="match status" value="1"/>
</dbReference>
<organism>
    <name type="scientific">Mycoplasma pneumoniae (strain ATCC 29342 / M129 / Subtype 1)</name>
    <name type="common">Mycoplasmoides pneumoniae</name>
    <dbReference type="NCBI Taxonomy" id="272634"/>
    <lineage>
        <taxon>Bacteria</taxon>
        <taxon>Bacillati</taxon>
        <taxon>Mycoplasmatota</taxon>
        <taxon>Mycoplasmoidales</taxon>
        <taxon>Mycoplasmoidaceae</taxon>
        <taxon>Mycoplasmoides</taxon>
    </lineage>
</organism>
<proteinExistence type="inferred from homology"/>
<accession>P75276</accession>
<evidence type="ECO:0000305" key="1"/>
<reference key="1">
    <citation type="journal article" date="1996" name="Nucleic Acids Res.">
        <title>Complete sequence analysis of the genome of the bacterium Mycoplasma pneumoniae.</title>
        <authorList>
            <person name="Himmelreich R."/>
            <person name="Hilbert H."/>
            <person name="Plagens H."/>
            <person name="Pirkl E."/>
            <person name="Li B.-C."/>
            <person name="Herrmann R."/>
        </authorList>
    </citation>
    <scope>NUCLEOTIDE SEQUENCE [LARGE SCALE GENOMIC DNA]</scope>
    <source>
        <strain>ATCC 29342 / M129 / Subtype 1</strain>
    </source>
</reference>
<keyword id="KW-1185">Reference proteome</keyword>
<sequence>MLTVPKVPENFFSFFQEDYFPRLTPRGLNIADNVASLFNDYNLNSIDFTGFNLKLLRQNDIVLKNKVRYNFALQMGFDTVYAGKNTTILKFSLQAQTINFTSLQELRDSFENNGNTLSTHLFWKPVVEQLTTDGGNDLTNIAKTAIGESLFNLKVNLTDSIIDQSVLQQAQKSFEDKILDPFHAERVEAKRIHDEEARRLEAERKRIAAELKAKEDEARRIREEHWAFYQSTRDVKSFKEFWAKRGKNVADKKQLIEALKLSFQAKQNPTFELLTNAFRNAINWYYNHKKHDEEAKRTAFGSGGISFAQSGLNGIFMPNWLRWELINRANIQLQLQNVKVRENNFEVNGWGVPVSINWNDHNNGINYRATTPWTYGFEITMNYKGSYGLKGIYWTLANWGLGGIPPEWSGDMELKFQIDGKLANWITQKQDYPGSLFQFQNDKLLFTLHVVQRITVKD</sequence>
<name>Y510_MYCPN</name>
<protein>
    <recommendedName>
        <fullName>Uncharacterized protein MPN_510</fullName>
    </recommendedName>
</protein>
<gene>
    <name type="ordered locus">MPN_510</name>
    <name type="ORF">MP332</name>
    <name type="ORF">P02_orf458</name>
</gene>